<protein>
    <recommendedName>
        <fullName evidence="1">tRNA (guanine-N(1)-)-methyltransferase</fullName>
        <ecNumber evidence="1">2.1.1.228</ecNumber>
    </recommendedName>
    <alternativeName>
        <fullName evidence="1">M1G-methyltransferase</fullName>
    </alternativeName>
    <alternativeName>
        <fullName evidence="1">tRNA [GM37] methyltransferase</fullName>
    </alternativeName>
</protein>
<dbReference type="EC" id="2.1.1.228" evidence="1"/>
<dbReference type="EMBL" id="CP000474">
    <property type="protein sequence ID" value="ABM06607.1"/>
    <property type="molecule type" value="Genomic_DNA"/>
</dbReference>
<dbReference type="RefSeq" id="WP_011775117.1">
    <property type="nucleotide sequence ID" value="NC_008711.1"/>
</dbReference>
<dbReference type="SMR" id="A1R7G3"/>
<dbReference type="STRING" id="290340.AAur_2449"/>
<dbReference type="KEGG" id="aau:AAur_2449"/>
<dbReference type="eggNOG" id="COG0336">
    <property type="taxonomic scope" value="Bacteria"/>
</dbReference>
<dbReference type="HOGENOM" id="CLU_047363_0_0_11"/>
<dbReference type="OrthoDB" id="9807416at2"/>
<dbReference type="Proteomes" id="UP000000637">
    <property type="component" value="Chromosome"/>
</dbReference>
<dbReference type="GO" id="GO:0005829">
    <property type="term" value="C:cytosol"/>
    <property type="evidence" value="ECO:0007669"/>
    <property type="project" value="TreeGrafter"/>
</dbReference>
<dbReference type="GO" id="GO:0052906">
    <property type="term" value="F:tRNA (guanine(37)-N1)-methyltransferase activity"/>
    <property type="evidence" value="ECO:0007669"/>
    <property type="project" value="UniProtKB-UniRule"/>
</dbReference>
<dbReference type="GO" id="GO:0002939">
    <property type="term" value="P:tRNA N1-guanine methylation"/>
    <property type="evidence" value="ECO:0007669"/>
    <property type="project" value="TreeGrafter"/>
</dbReference>
<dbReference type="CDD" id="cd18080">
    <property type="entry name" value="TrmD-like"/>
    <property type="match status" value="1"/>
</dbReference>
<dbReference type="FunFam" id="1.10.1270.20:FF:000002">
    <property type="entry name" value="tRNA (guanine-N(1)-)-methyltransferase"/>
    <property type="match status" value="1"/>
</dbReference>
<dbReference type="FunFam" id="3.40.1280.10:FF:000001">
    <property type="entry name" value="tRNA (guanine-N(1)-)-methyltransferase"/>
    <property type="match status" value="1"/>
</dbReference>
<dbReference type="Gene3D" id="3.40.1280.10">
    <property type="match status" value="1"/>
</dbReference>
<dbReference type="Gene3D" id="1.10.1270.20">
    <property type="entry name" value="tRNA(m1g37)methyltransferase, domain 2"/>
    <property type="match status" value="1"/>
</dbReference>
<dbReference type="HAMAP" id="MF_00605">
    <property type="entry name" value="TrmD"/>
    <property type="match status" value="1"/>
</dbReference>
<dbReference type="InterPro" id="IPR029028">
    <property type="entry name" value="Alpha/beta_knot_MTases"/>
</dbReference>
<dbReference type="InterPro" id="IPR023148">
    <property type="entry name" value="tRNA_m1G_MeTrfase_C_sf"/>
</dbReference>
<dbReference type="InterPro" id="IPR002649">
    <property type="entry name" value="tRNA_m1G_MeTrfase_TrmD"/>
</dbReference>
<dbReference type="InterPro" id="IPR029026">
    <property type="entry name" value="tRNA_m1G_MTases_N"/>
</dbReference>
<dbReference type="InterPro" id="IPR016009">
    <property type="entry name" value="tRNA_MeTrfase_TRMD/TRM10"/>
</dbReference>
<dbReference type="NCBIfam" id="NF000648">
    <property type="entry name" value="PRK00026.1"/>
    <property type="match status" value="1"/>
</dbReference>
<dbReference type="NCBIfam" id="TIGR00088">
    <property type="entry name" value="trmD"/>
    <property type="match status" value="1"/>
</dbReference>
<dbReference type="PANTHER" id="PTHR46417">
    <property type="entry name" value="TRNA (GUANINE-N(1)-)-METHYLTRANSFERASE"/>
    <property type="match status" value="1"/>
</dbReference>
<dbReference type="PANTHER" id="PTHR46417:SF1">
    <property type="entry name" value="TRNA (GUANINE-N(1)-)-METHYLTRANSFERASE"/>
    <property type="match status" value="1"/>
</dbReference>
<dbReference type="Pfam" id="PF01746">
    <property type="entry name" value="tRNA_m1G_MT"/>
    <property type="match status" value="1"/>
</dbReference>
<dbReference type="PIRSF" id="PIRSF000386">
    <property type="entry name" value="tRNA_mtase"/>
    <property type="match status" value="1"/>
</dbReference>
<dbReference type="SUPFAM" id="SSF75217">
    <property type="entry name" value="alpha/beta knot"/>
    <property type="match status" value="1"/>
</dbReference>
<keyword id="KW-0963">Cytoplasm</keyword>
<keyword id="KW-0489">Methyltransferase</keyword>
<keyword id="KW-0949">S-adenosyl-L-methionine</keyword>
<keyword id="KW-0808">Transferase</keyword>
<keyword id="KW-0819">tRNA processing</keyword>
<reference key="1">
    <citation type="journal article" date="2006" name="PLoS Genet.">
        <title>Secrets of soil survival revealed by the genome sequence of Arthrobacter aurescens TC1.</title>
        <authorList>
            <person name="Mongodin E.F."/>
            <person name="Shapir N."/>
            <person name="Daugherty S.C."/>
            <person name="DeBoy R.T."/>
            <person name="Emerson J.B."/>
            <person name="Shvartzbeyn A."/>
            <person name="Radune D."/>
            <person name="Vamathevan J."/>
            <person name="Riggs F."/>
            <person name="Grinberg V."/>
            <person name="Khouri H.M."/>
            <person name="Wackett L.P."/>
            <person name="Nelson K.E."/>
            <person name="Sadowsky M.J."/>
        </authorList>
    </citation>
    <scope>NUCLEOTIDE SEQUENCE [LARGE SCALE GENOMIC DNA]</scope>
    <source>
        <strain>TC1</strain>
    </source>
</reference>
<comment type="function">
    <text evidence="1">Specifically methylates guanosine-37 in various tRNAs.</text>
</comment>
<comment type="catalytic activity">
    <reaction evidence="1">
        <text>guanosine(37) in tRNA + S-adenosyl-L-methionine = N(1)-methylguanosine(37) in tRNA + S-adenosyl-L-homocysteine + H(+)</text>
        <dbReference type="Rhea" id="RHEA:36899"/>
        <dbReference type="Rhea" id="RHEA-COMP:10145"/>
        <dbReference type="Rhea" id="RHEA-COMP:10147"/>
        <dbReference type="ChEBI" id="CHEBI:15378"/>
        <dbReference type="ChEBI" id="CHEBI:57856"/>
        <dbReference type="ChEBI" id="CHEBI:59789"/>
        <dbReference type="ChEBI" id="CHEBI:73542"/>
        <dbReference type="ChEBI" id="CHEBI:74269"/>
        <dbReference type="EC" id="2.1.1.228"/>
    </reaction>
</comment>
<comment type="subunit">
    <text evidence="1">Homodimer.</text>
</comment>
<comment type="subcellular location">
    <subcellularLocation>
        <location evidence="1">Cytoplasm</location>
    </subcellularLocation>
</comment>
<comment type="similarity">
    <text evidence="1">Belongs to the RNA methyltransferase TrmD family.</text>
</comment>
<evidence type="ECO:0000255" key="1">
    <source>
        <dbReference type="HAMAP-Rule" id="MF_00605"/>
    </source>
</evidence>
<proteinExistence type="inferred from homology"/>
<feature type="chain" id="PRO_1000006447" description="tRNA (guanine-N(1)-)-methyltransferase">
    <location>
        <begin position="1"/>
        <end position="266"/>
    </location>
</feature>
<feature type="binding site" evidence="1">
    <location>
        <position position="113"/>
    </location>
    <ligand>
        <name>S-adenosyl-L-methionine</name>
        <dbReference type="ChEBI" id="CHEBI:59789"/>
    </ligand>
</feature>
<feature type="binding site" evidence="1">
    <location>
        <begin position="137"/>
        <end position="142"/>
    </location>
    <ligand>
        <name>S-adenosyl-L-methionine</name>
        <dbReference type="ChEBI" id="CHEBI:59789"/>
    </ligand>
</feature>
<organism>
    <name type="scientific">Paenarthrobacter aurescens (strain TC1)</name>
    <dbReference type="NCBI Taxonomy" id="290340"/>
    <lineage>
        <taxon>Bacteria</taxon>
        <taxon>Bacillati</taxon>
        <taxon>Actinomycetota</taxon>
        <taxon>Actinomycetes</taxon>
        <taxon>Micrococcales</taxon>
        <taxon>Micrococcaceae</taxon>
        <taxon>Paenarthrobacter</taxon>
    </lineage>
</organism>
<sequence>MRIDVVSIFPEYLAPLELSLIGKARQDGLLELNVHDLRTFTTDKHRTVDDTPYGGGAGMVMKPEPWAQALESVAAARENSKPVLIVPSPAGEKFNQALAYELAEEEQLVFACGRYEGIDERVIDWAQDHFRVRPVSLGDYVLNGGEVAVLAMVEAIGRLLPGVVGNPESLVEESHSDGLLEYPVYTKPSAWRDHDVPPILLSGNHGKIAQWRRHEQFRRTAERRPDLMEGLDAGVLSRADRQALADLGYDVVDGRLRAKPGGDTEN</sequence>
<gene>
    <name evidence="1" type="primary">trmD</name>
    <name type="ordered locus">AAur_2449</name>
</gene>
<name>TRMD_PAEAT</name>
<accession>A1R7G3</accession>